<name>MTLD_OCEIH</name>
<proteinExistence type="inferred from homology"/>
<keyword id="KW-0520">NAD</keyword>
<keyword id="KW-0560">Oxidoreductase</keyword>
<keyword id="KW-1185">Reference proteome</keyword>
<dbReference type="EC" id="1.1.1.17" evidence="1"/>
<dbReference type="EMBL" id="BA000028">
    <property type="protein sequence ID" value="BAC14556.1"/>
    <property type="molecule type" value="Genomic_DNA"/>
</dbReference>
<dbReference type="RefSeq" id="WP_011066993.1">
    <property type="nucleotide sequence ID" value="NC_004193.1"/>
</dbReference>
<dbReference type="SMR" id="Q8EN87"/>
<dbReference type="STRING" id="221109.gene:10734852"/>
<dbReference type="KEGG" id="oih:OB2600"/>
<dbReference type="eggNOG" id="COG0246">
    <property type="taxonomic scope" value="Bacteria"/>
</dbReference>
<dbReference type="HOGENOM" id="CLU_036089_2_0_9"/>
<dbReference type="OrthoDB" id="271711at2"/>
<dbReference type="PhylomeDB" id="Q8EN87"/>
<dbReference type="Proteomes" id="UP000000822">
    <property type="component" value="Chromosome"/>
</dbReference>
<dbReference type="GO" id="GO:0005829">
    <property type="term" value="C:cytosol"/>
    <property type="evidence" value="ECO:0007669"/>
    <property type="project" value="TreeGrafter"/>
</dbReference>
<dbReference type="GO" id="GO:0008926">
    <property type="term" value="F:mannitol-1-phosphate 5-dehydrogenase activity"/>
    <property type="evidence" value="ECO:0007669"/>
    <property type="project" value="UniProtKB-UniRule"/>
</dbReference>
<dbReference type="GO" id="GO:0019592">
    <property type="term" value="P:mannitol catabolic process"/>
    <property type="evidence" value="ECO:0007669"/>
    <property type="project" value="TreeGrafter"/>
</dbReference>
<dbReference type="Gene3D" id="1.10.1040.10">
    <property type="entry name" value="N-(1-d-carboxylethyl)-l-norvaline Dehydrogenase, domain 2"/>
    <property type="match status" value="1"/>
</dbReference>
<dbReference type="Gene3D" id="3.40.50.720">
    <property type="entry name" value="NAD(P)-binding Rossmann-like Domain"/>
    <property type="match status" value="1"/>
</dbReference>
<dbReference type="HAMAP" id="MF_00196">
    <property type="entry name" value="Mannitol_dehydrog"/>
    <property type="match status" value="1"/>
</dbReference>
<dbReference type="InterPro" id="IPR008927">
    <property type="entry name" value="6-PGluconate_DH-like_C_sf"/>
</dbReference>
<dbReference type="InterPro" id="IPR013328">
    <property type="entry name" value="6PGD_dom2"/>
</dbReference>
<dbReference type="InterPro" id="IPR023028">
    <property type="entry name" value="Mannitol_1_phos_5_DH"/>
</dbReference>
<dbReference type="InterPro" id="IPR000669">
    <property type="entry name" value="Mannitol_DH"/>
</dbReference>
<dbReference type="InterPro" id="IPR013118">
    <property type="entry name" value="Mannitol_DH_C"/>
</dbReference>
<dbReference type="InterPro" id="IPR023027">
    <property type="entry name" value="Mannitol_DH_CS"/>
</dbReference>
<dbReference type="InterPro" id="IPR013131">
    <property type="entry name" value="Mannitol_DH_N"/>
</dbReference>
<dbReference type="InterPro" id="IPR036291">
    <property type="entry name" value="NAD(P)-bd_dom_sf"/>
</dbReference>
<dbReference type="NCBIfam" id="NF002646">
    <property type="entry name" value="PRK02318.1-2"/>
    <property type="match status" value="1"/>
</dbReference>
<dbReference type="NCBIfam" id="NF002647">
    <property type="entry name" value="PRK02318.1-3"/>
    <property type="match status" value="1"/>
</dbReference>
<dbReference type="NCBIfam" id="NF002649">
    <property type="entry name" value="PRK02318.2-1"/>
    <property type="match status" value="1"/>
</dbReference>
<dbReference type="NCBIfam" id="NF002652">
    <property type="entry name" value="PRK02318.2-5"/>
    <property type="match status" value="1"/>
</dbReference>
<dbReference type="PANTHER" id="PTHR30524:SF0">
    <property type="entry name" value="ALTRONATE OXIDOREDUCTASE-RELATED"/>
    <property type="match status" value="1"/>
</dbReference>
<dbReference type="PANTHER" id="PTHR30524">
    <property type="entry name" value="MANNITOL-1-PHOSPHATE 5-DEHYDROGENASE"/>
    <property type="match status" value="1"/>
</dbReference>
<dbReference type="Pfam" id="PF01232">
    <property type="entry name" value="Mannitol_dh"/>
    <property type="match status" value="1"/>
</dbReference>
<dbReference type="Pfam" id="PF08125">
    <property type="entry name" value="Mannitol_dh_C"/>
    <property type="match status" value="1"/>
</dbReference>
<dbReference type="PRINTS" id="PR00084">
    <property type="entry name" value="MTLDHDRGNASE"/>
</dbReference>
<dbReference type="SUPFAM" id="SSF48179">
    <property type="entry name" value="6-phosphogluconate dehydrogenase C-terminal domain-like"/>
    <property type="match status" value="1"/>
</dbReference>
<dbReference type="SUPFAM" id="SSF51735">
    <property type="entry name" value="NAD(P)-binding Rossmann-fold domains"/>
    <property type="match status" value="1"/>
</dbReference>
<dbReference type="PROSITE" id="PS00974">
    <property type="entry name" value="MANNITOL_DHGENASE"/>
    <property type="match status" value="1"/>
</dbReference>
<evidence type="ECO:0000255" key="1">
    <source>
        <dbReference type="HAMAP-Rule" id="MF_00196"/>
    </source>
</evidence>
<organism>
    <name type="scientific">Oceanobacillus iheyensis (strain DSM 14371 / CIP 107618 / JCM 11309 / KCTC 3954 / HTE831)</name>
    <dbReference type="NCBI Taxonomy" id="221109"/>
    <lineage>
        <taxon>Bacteria</taxon>
        <taxon>Bacillati</taxon>
        <taxon>Bacillota</taxon>
        <taxon>Bacilli</taxon>
        <taxon>Bacillales</taxon>
        <taxon>Bacillaceae</taxon>
        <taxon>Oceanobacillus</taxon>
    </lineage>
</organism>
<accession>Q8EN87</accession>
<feature type="chain" id="PRO_0000170714" description="Mannitol-1-phosphate 5-dehydrogenase">
    <location>
        <begin position="1"/>
        <end position="386"/>
    </location>
</feature>
<feature type="binding site" evidence="1">
    <location>
        <begin position="4"/>
        <end position="15"/>
    </location>
    <ligand>
        <name>NAD(+)</name>
        <dbReference type="ChEBI" id="CHEBI:57540"/>
    </ligand>
</feature>
<reference key="1">
    <citation type="journal article" date="2002" name="Nucleic Acids Res.">
        <title>Genome sequence of Oceanobacillus iheyensis isolated from the Iheya Ridge and its unexpected adaptive capabilities to extreme environments.</title>
        <authorList>
            <person name="Takami H."/>
            <person name="Takaki Y."/>
            <person name="Uchiyama I."/>
        </authorList>
    </citation>
    <scope>NUCLEOTIDE SEQUENCE [LARGE SCALE GENOMIC DNA]</scope>
    <source>
        <strain>DSM 14371 / CIP 107618 / JCM 11309 / KCTC 3954 / HTE831</strain>
    </source>
</reference>
<gene>
    <name evidence="1" type="primary">mtlD</name>
    <name type="ordered locus">OB2600</name>
</gene>
<protein>
    <recommendedName>
        <fullName evidence="1">Mannitol-1-phosphate 5-dehydrogenase</fullName>
        <ecNumber evidence="1">1.1.1.17</ecNumber>
    </recommendedName>
</protein>
<comment type="catalytic activity">
    <reaction evidence="1">
        <text>D-mannitol 1-phosphate + NAD(+) = beta-D-fructose 6-phosphate + NADH + H(+)</text>
        <dbReference type="Rhea" id="RHEA:19661"/>
        <dbReference type="ChEBI" id="CHEBI:15378"/>
        <dbReference type="ChEBI" id="CHEBI:57540"/>
        <dbReference type="ChEBI" id="CHEBI:57634"/>
        <dbReference type="ChEBI" id="CHEBI:57945"/>
        <dbReference type="ChEBI" id="CHEBI:61381"/>
        <dbReference type="EC" id="1.1.1.17"/>
    </reaction>
</comment>
<comment type="similarity">
    <text evidence="1">Belongs to the mannitol dehydrogenase family.</text>
</comment>
<sequence>MKTAVHFGAGNIGRGFIGLLLYQSGYQTIFIDVNNQVIDEINKQKSYHVYLAGKEKQELTVNHITGINSIKEPDAVTEAIVKADVVTTAVGPTILPVIAKAISKGLQERTKQNNSPLNIIACENMVGGSSLLKEHVFESLEAHKIGEFDRLYGFPDAAVDRIVPNQTNKNLLDVMVEPYYEWVVEKKKIVGEVPPIFGITYVDDLAPYIERKLFTVNTGHAIPAYLGTHLGYDTIVEAMKDLRIDDTIYGALAESGEALIHAYGFNREMHQEYVSKIIQRFQNPYISDDVKRVARGPIRKLGAKDRLVKPALMYIEYTGKIPVYLAKTIAAALLFNNDEDREAIELQKKISATGYQQAFVEVSGCDSDSILTKKVIEQLRLLQNKK</sequence>